<organism>
    <name type="scientific">Colwellia psychrerythraea (strain 34H / ATCC BAA-681)</name>
    <name type="common">Vibrio psychroerythus</name>
    <dbReference type="NCBI Taxonomy" id="167879"/>
    <lineage>
        <taxon>Bacteria</taxon>
        <taxon>Pseudomonadati</taxon>
        <taxon>Pseudomonadota</taxon>
        <taxon>Gammaproteobacteria</taxon>
        <taxon>Alteromonadales</taxon>
        <taxon>Colwelliaceae</taxon>
        <taxon>Colwellia</taxon>
    </lineage>
</organism>
<sequence length="247" mass="26739">MTTNPKPAYRRILLKLSGEALMGDEGFGIDPKVLDRMAQEIKELVEMGIQVGLVIGGGNLFRGAGLAEAGMNRVVGDQMGMLATVMNGLAMRDALHRAFVNTRLMSAIDLAGVCERYNWANAISLLKSGRVVIFSAGTGNPFFTTDSAACLRGIEIEADAVLKATKVDGVYSEDPAKNPEAELYSELSYDEVLDKELKVMDLAAFTLARDHNIPIRVFNMNKPGALKSVIMGNTEGTVISHKKRTET</sequence>
<protein>
    <recommendedName>
        <fullName evidence="1">Uridylate kinase</fullName>
        <shortName evidence="1">UK</shortName>
        <ecNumber evidence="1">2.7.4.22</ecNumber>
    </recommendedName>
    <alternativeName>
        <fullName evidence="1">Uridine monophosphate kinase</fullName>
        <shortName evidence="1">UMP kinase</shortName>
        <shortName evidence="1">UMPK</shortName>
    </alternativeName>
</protein>
<accession>Q485G8</accession>
<dbReference type="EC" id="2.7.4.22" evidence="1"/>
<dbReference type="EMBL" id="CP000083">
    <property type="protein sequence ID" value="AAZ27929.1"/>
    <property type="molecule type" value="Genomic_DNA"/>
</dbReference>
<dbReference type="RefSeq" id="WP_011042391.1">
    <property type="nucleotide sequence ID" value="NC_003910.7"/>
</dbReference>
<dbReference type="SMR" id="Q485G8"/>
<dbReference type="STRING" id="167879.CPS_1555"/>
<dbReference type="KEGG" id="cps:CPS_1555"/>
<dbReference type="eggNOG" id="COG0528">
    <property type="taxonomic scope" value="Bacteria"/>
</dbReference>
<dbReference type="HOGENOM" id="CLU_033861_0_0_6"/>
<dbReference type="UniPathway" id="UPA00159">
    <property type="reaction ID" value="UER00275"/>
</dbReference>
<dbReference type="Proteomes" id="UP000000547">
    <property type="component" value="Chromosome"/>
</dbReference>
<dbReference type="GO" id="GO:0005829">
    <property type="term" value="C:cytosol"/>
    <property type="evidence" value="ECO:0007669"/>
    <property type="project" value="TreeGrafter"/>
</dbReference>
<dbReference type="GO" id="GO:0005524">
    <property type="term" value="F:ATP binding"/>
    <property type="evidence" value="ECO:0007669"/>
    <property type="project" value="UniProtKB-KW"/>
</dbReference>
<dbReference type="GO" id="GO:0033862">
    <property type="term" value="F:UMP kinase activity"/>
    <property type="evidence" value="ECO:0007669"/>
    <property type="project" value="UniProtKB-EC"/>
</dbReference>
<dbReference type="GO" id="GO:0044210">
    <property type="term" value="P:'de novo' CTP biosynthetic process"/>
    <property type="evidence" value="ECO:0007669"/>
    <property type="project" value="UniProtKB-UniRule"/>
</dbReference>
<dbReference type="GO" id="GO:0006225">
    <property type="term" value="P:UDP biosynthetic process"/>
    <property type="evidence" value="ECO:0007669"/>
    <property type="project" value="TreeGrafter"/>
</dbReference>
<dbReference type="CDD" id="cd04254">
    <property type="entry name" value="AAK_UMPK-PyrH-Ec"/>
    <property type="match status" value="1"/>
</dbReference>
<dbReference type="FunFam" id="3.40.1160.10:FF:000001">
    <property type="entry name" value="Uridylate kinase"/>
    <property type="match status" value="1"/>
</dbReference>
<dbReference type="Gene3D" id="3.40.1160.10">
    <property type="entry name" value="Acetylglutamate kinase-like"/>
    <property type="match status" value="1"/>
</dbReference>
<dbReference type="HAMAP" id="MF_01220_B">
    <property type="entry name" value="PyrH_B"/>
    <property type="match status" value="1"/>
</dbReference>
<dbReference type="InterPro" id="IPR036393">
    <property type="entry name" value="AceGlu_kinase-like_sf"/>
</dbReference>
<dbReference type="InterPro" id="IPR001048">
    <property type="entry name" value="Asp/Glu/Uridylate_kinase"/>
</dbReference>
<dbReference type="InterPro" id="IPR011817">
    <property type="entry name" value="Uridylate_kinase"/>
</dbReference>
<dbReference type="InterPro" id="IPR015963">
    <property type="entry name" value="Uridylate_kinase_bac"/>
</dbReference>
<dbReference type="NCBIfam" id="TIGR02075">
    <property type="entry name" value="pyrH_bact"/>
    <property type="match status" value="1"/>
</dbReference>
<dbReference type="PANTHER" id="PTHR42833">
    <property type="entry name" value="URIDYLATE KINASE"/>
    <property type="match status" value="1"/>
</dbReference>
<dbReference type="PANTHER" id="PTHR42833:SF4">
    <property type="entry name" value="URIDYLATE KINASE PUMPKIN, CHLOROPLASTIC"/>
    <property type="match status" value="1"/>
</dbReference>
<dbReference type="Pfam" id="PF00696">
    <property type="entry name" value="AA_kinase"/>
    <property type="match status" value="1"/>
</dbReference>
<dbReference type="PIRSF" id="PIRSF005650">
    <property type="entry name" value="Uridylate_kin"/>
    <property type="match status" value="1"/>
</dbReference>
<dbReference type="SUPFAM" id="SSF53633">
    <property type="entry name" value="Carbamate kinase-like"/>
    <property type="match status" value="1"/>
</dbReference>
<keyword id="KW-0021">Allosteric enzyme</keyword>
<keyword id="KW-0067">ATP-binding</keyword>
<keyword id="KW-0963">Cytoplasm</keyword>
<keyword id="KW-0418">Kinase</keyword>
<keyword id="KW-0547">Nucleotide-binding</keyword>
<keyword id="KW-0665">Pyrimidine biosynthesis</keyword>
<keyword id="KW-0808">Transferase</keyword>
<evidence type="ECO:0000255" key="1">
    <source>
        <dbReference type="HAMAP-Rule" id="MF_01220"/>
    </source>
</evidence>
<name>PYRH_COLP3</name>
<proteinExistence type="inferred from homology"/>
<reference key="1">
    <citation type="journal article" date="2005" name="Proc. Natl. Acad. Sci. U.S.A.">
        <title>The psychrophilic lifestyle as revealed by the genome sequence of Colwellia psychrerythraea 34H through genomic and proteomic analyses.</title>
        <authorList>
            <person name="Methe B.A."/>
            <person name="Nelson K.E."/>
            <person name="Deming J.W."/>
            <person name="Momen B."/>
            <person name="Melamud E."/>
            <person name="Zhang X."/>
            <person name="Moult J."/>
            <person name="Madupu R."/>
            <person name="Nelson W.C."/>
            <person name="Dodson R.J."/>
            <person name="Brinkac L.M."/>
            <person name="Daugherty S.C."/>
            <person name="Durkin A.S."/>
            <person name="DeBoy R.T."/>
            <person name="Kolonay J.F."/>
            <person name="Sullivan S.A."/>
            <person name="Zhou L."/>
            <person name="Davidsen T.M."/>
            <person name="Wu M."/>
            <person name="Huston A.L."/>
            <person name="Lewis M."/>
            <person name="Weaver B."/>
            <person name="Weidman J.F."/>
            <person name="Khouri H."/>
            <person name="Utterback T.R."/>
            <person name="Feldblyum T.V."/>
            <person name="Fraser C.M."/>
        </authorList>
    </citation>
    <scope>NUCLEOTIDE SEQUENCE [LARGE SCALE GENOMIC DNA]</scope>
    <source>
        <strain>34H / ATCC BAA-681</strain>
    </source>
</reference>
<feature type="chain" id="PRO_1000053918" description="Uridylate kinase">
    <location>
        <begin position="1"/>
        <end position="247"/>
    </location>
</feature>
<feature type="region of interest" description="Involved in allosteric activation by GTP" evidence="1">
    <location>
        <begin position="23"/>
        <end position="28"/>
    </location>
</feature>
<feature type="binding site" evidence="1">
    <location>
        <begin position="15"/>
        <end position="18"/>
    </location>
    <ligand>
        <name>ATP</name>
        <dbReference type="ChEBI" id="CHEBI:30616"/>
    </ligand>
</feature>
<feature type="binding site" evidence="1">
    <location>
        <position position="57"/>
    </location>
    <ligand>
        <name>UMP</name>
        <dbReference type="ChEBI" id="CHEBI:57865"/>
    </ligand>
</feature>
<feature type="binding site" evidence="1">
    <location>
        <position position="58"/>
    </location>
    <ligand>
        <name>ATP</name>
        <dbReference type="ChEBI" id="CHEBI:30616"/>
    </ligand>
</feature>
<feature type="binding site" evidence="1">
    <location>
        <position position="62"/>
    </location>
    <ligand>
        <name>ATP</name>
        <dbReference type="ChEBI" id="CHEBI:30616"/>
    </ligand>
</feature>
<feature type="binding site" evidence="1">
    <location>
        <position position="77"/>
    </location>
    <ligand>
        <name>UMP</name>
        <dbReference type="ChEBI" id="CHEBI:57865"/>
    </ligand>
</feature>
<feature type="binding site" evidence="1">
    <location>
        <begin position="138"/>
        <end position="145"/>
    </location>
    <ligand>
        <name>UMP</name>
        <dbReference type="ChEBI" id="CHEBI:57865"/>
    </ligand>
</feature>
<feature type="binding site" evidence="1">
    <location>
        <position position="165"/>
    </location>
    <ligand>
        <name>ATP</name>
        <dbReference type="ChEBI" id="CHEBI:30616"/>
    </ligand>
</feature>
<feature type="binding site" evidence="1">
    <location>
        <position position="171"/>
    </location>
    <ligand>
        <name>ATP</name>
        <dbReference type="ChEBI" id="CHEBI:30616"/>
    </ligand>
</feature>
<feature type="binding site" evidence="1">
    <location>
        <position position="174"/>
    </location>
    <ligand>
        <name>ATP</name>
        <dbReference type="ChEBI" id="CHEBI:30616"/>
    </ligand>
</feature>
<comment type="function">
    <text evidence="1">Catalyzes the reversible phosphorylation of UMP to UDP.</text>
</comment>
<comment type="catalytic activity">
    <reaction evidence="1">
        <text>UMP + ATP = UDP + ADP</text>
        <dbReference type="Rhea" id="RHEA:24400"/>
        <dbReference type="ChEBI" id="CHEBI:30616"/>
        <dbReference type="ChEBI" id="CHEBI:57865"/>
        <dbReference type="ChEBI" id="CHEBI:58223"/>
        <dbReference type="ChEBI" id="CHEBI:456216"/>
        <dbReference type="EC" id="2.7.4.22"/>
    </reaction>
</comment>
<comment type="activity regulation">
    <text evidence="1">Allosterically activated by GTP. Inhibited by UTP.</text>
</comment>
<comment type="pathway">
    <text evidence="1">Pyrimidine metabolism; CTP biosynthesis via de novo pathway; UDP from UMP (UMPK route): step 1/1.</text>
</comment>
<comment type="subunit">
    <text evidence="1">Homohexamer.</text>
</comment>
<comment type="subcellular location">
    <subcellularLocation>
        <location evidence="1">Cytoplasm</location>
    </subcellularLocation>
</comment>
<comment type="similarity">
    <text evidence="1">Belongs to the UMP kinase family.</text>
</comment>
<gene>
    <name evidence="1" type="primary">pyrH</name>
    <name type="ordered locus">CPS_1555</name>
</gene>